<organism>
    <name type="scientific">Bartlettina sordida</name>
    <name type="common">Purple torch</name>
    <name type="synonym">Eupatorium atrorubens</name>
    <dbReference type="NCBI Taxonomy" id="13517"/>
    <lineage>
        <taxon>Eukaryota</taxon>
        <taxon>Viridiplantae</taxon>
        <taxon>Streptophyta</taxon>
        <taxon>Embryophyta</taxon>
        <taxon>Tracheophyta</taxon>
        <taxon>Spermatophyta</taxon>
        <taxon>Magnoliopsida</taxon>
        <taxon>eudicotyledons</taxon>
        <taxon>Gunneridae</taxon>
        <taxon>Pentapetalae</taxon>
        <taxon>asterids</taxon>
        <taxon>campanulids</taxon>
        <taxon>Asterales</taxon>
        <taxon>Asteraceae</taxon>
        <taxon>Asteroideae</taxon>
        <taxon>Heliantheae alliance</taxon>
        <taxon>Eupatorieae</taxon>
        <taxon>Eupatorium</taxon>
    </lineage>
</organism>
<accession>Q37192</accession>
<comment type="function">
    <text evidence="1">RuBisCO catalyzes two reactions: the carboxylation of D-ribulose 1,5-bisphosphate, the primary event in carbon dioxide fixation, as well as the oxidative fragmentation of the pentose substrate in the photorespiration process. Both reactions occur simultaneously and in competition at the same active site.</text>
</comment>
<comment type="catalytic activity">
    <reaction evidence="1">
        <text>2 (2R)-3-phosphoglycerate + 2 H(+) = D-ribulose 1,5-bisphosphate + CO2 + H2O</text>
        <dbReference type="Rhea" id="RHEA:23124"/>
        <dbReference type="ChEBI" id="CHEBI:15377"/>
        <dbReference type="ChEBI" id="CHEBI:15378"/>
        <dbReference type="ChEBI" id="CHEBI:16526"/>
        <dbReference type="ChEBI" id="CHEBI:57870"/>
        <dbReference type="ChEBI" id="CHEBI:58272"/>
        <dbReference type="EC" id="4.1.1.39"/>
    </reaction>
</comment>
<comment type="catalytic activity">
    <reaction evidence="1">
        <text>D-ribulose 1,5-bisphosphate + O2 = 2-phosphoglycolate + (2R)-3-phosphoglycerate + 2 H(+)</text>
        <dbReference type="Rhea" id="RHEA:36631"/>
        <dbReference type="ChEBI" id="CHEBI:15378"/>
        <dbReference type="ChEBI" id="CHEBI:15379"/>
        <dbReference type="ChEBI" id="CHEBI:57870"/>
        <dbReference type="ChEBI" id="CHEBI:58033"/>
        <dbReference type="ChEBI" id="CHEBI:58272"/>
    </reaction>
</comment>
<comment type="cofactor">
    <cofactor evidence="1">
        <name>Mg(2+)</name>
        <dbReference type="ChEBI" id="CHEBI:18420"/>
    </cofactor>
    <text evidence="1">Binds 1 Mg(2+) ion per subunit.</text>
</comment>
<comment type="subunit">
    <text evidence="1">Heterohexadecamer of 8 large chains and 8 small chains; disulfide-linked. The disulfide link is formed within the large subunit homodimers.</text>
</comment>
<comment type="subcellular location">
    <subcellularLocation>
        <location>Plastid</location>
        <location>Chloroplast</location>
    </subcellularLocation>
</comment>
<comment type="PTM">
    <text evidence="1">The disulfide bond which can form in the large chain dimeric partners within the hexadecamer appears to be associated with oxidative stress and protein turnover.</text>
</comment>
<comment type="miscellaneous">
    <text evidence="1">The basic functional RuBisCO is composed of a large chain homodimer in a 'head-to-tail' conformation. In form I RuBisCO this homodimer is arranged in a barrel-like tetramer with the small subunits forming a tetrameric 'cap' on each end of the 'barrel'.</text>
</comment>
<comment type="similarity">
    <text evidence="1">Belongs to the RuBisCO large chain family. Type I subfamily.</text>
</comment>
<dbReference type="EC" id="4.1.1.39" evidence="1"/>
<dbReference type="EMBL" id="L13649">
    <property type="protein sequence ID" value="AAA84248.1"/>
    <property type="molecule type" value="Genomic_DNA"/>
</dbReference>
<dbReference type="SMR" id="Q37192"/>
<dbReference type="GO" id="GO:0009507">
    <property type="term" value="C:chloroplast"/>
    <property type="evidence" value="ECO:0007669"/>
    <property type="project" value="UniProtKB-SubCell"/>
</dbReference>
<dbReference type="GO" id="GO:0000287">
    <property type="term" value="F:magnesium ion binding"/>
    <property type="evidence" value="ECO:0007669"/>
    <property type="project" value="UniProtKB-UniRule"/>
</dbReference>
<dbReference type="GO" id="GO:0004497">
    <property type="term" value="F:monooxygenase activity"/>
    <property type="evidence" value="ECO:0007669"/>
    <property type="project" value="UniProtKB-KW"/>
</dbReference>
<dbReference type="GO" id="GO:0016984">
    <property type="term" value="F:ribulose-bisphosphate carboxylase activity"/>
    <property type="evidence" value="ECO:0007669"/>
    <property type="project" value="UniProtKB-UniRule"/>
</dbReference>
<dbReference type="GO" id="GO:0009853">
    <property type="term" value="P:photorespiration"/>
    <property type="evidence" value="ECO:0007669"/>
    <property type="project" value="UniProtKB-KW"/>
</dbReference>
<dbReference type="GO" id="GO:0019253">
    <property type="term" value="P:reductive pentose-phosphate cycle"/>
    <property type="evidence" value="ECO:0007669"/>
    <property type="project" value="UniProtKB-UniRule"/>
</dbReference>
<dbReference type="CDD" id="cd08212">
    <property type="entry name" value="RuBisCO_large_I"/>
    <property type="match status" value="1"/>
</dbReference>
<dbReference type="FunFam" id="3.20.20.110:FF:000001">
    <property type="entry name" value="Ribulose bisphosphate carboxylase large chain"/>
    <property type="match status" value="1"/>
</dbReference>
<dbReference type="FunFam" id="3.30.70.150:FF:000001">
    <property type="entry name" value="Ribulose bisphosphate carboxylase large chain"/>
    <property type="match status" value="1"/>
</dbReference>
<dbReference type="Gene3D" id="3.20.20.110">
    <property type="entry name" value="Ribulose bisphosphate carboxylase, large subunit, C-terminal domain"/>
    <property type="match status" value="1"/>
</dbReference>
<dbReference type="Gene3D" id="3.30.70.150">
    <property type="entry name" value="RuBisCO large subunit, N-terminal domain"/>
    <property type="match status" value="1"/>
</dbReference>
<dbReference type="HAMAP" id="MF_01338">
    <property type="entry name" value="RuBisCO_L_type1"/>
    <property type="match status" value="1"/>
</dbReference>
<dbReference type="InterPro" id="IPR033966">
    <property type="entry name" value="RuBisCO"/>
</dbReference>
<dbReference type="InterPro" id="IPR020878">
    <property type="entry name" value="RuBisCo_large_chain_AS"/>
</dbReference>
<dbReference type="InterPro" id="IPR000685">
    <property type="entry name" value="RuBisCO_lsu_C"/>
</dbReference>
<dbReference type="InterPro" id="IPR036376">
    <property type="entry name" value="RuBisCO_lsu_C_sf"/>
</dbReference>
<dbReference type="InterPro" id="IPR017443">
    <property type="entry name" value="RuBisCO_lsu_fd_N"/>
</dbReference>
<dbReference type="InterPro" id="IPR036422">
    <property type="entry name" value="RuBisCO_lsu_N_sf"/>
</dbReference>
<dbReference type="InterPro" id="IPR020888">
    <property type="entry name" value="RuBisCO_lsuI"/>
</dbReference>
<dbReference type="NCBIfam" id="NF003252">
    <property type="entry name" value="PRK04208.1"/>
    <property type="match status" value="1"/>
</dbReference>
<dbReference type="PANTHER" id="PTHR42704">
    <property type="entry name" value="RIBULOSE BISPHOSPHATE CARBOXYLASE"/>
    <property type="match status" value="1"/>
</dbReference>
<dbReference type="PANTHER" id="PTHR42704:SF15">
    <property type="entry name" value="RIBULOSE BISPHOSPHATE CARBOXYLASE LARGE CHAIN"/>
    <property type="match status" value="1"/>
</dbReference>
<dbReference type="Pfam" id="PF00016">
    <property type="entry name" value="RuBisCO_large"/>
    <property type="match status" value="1"/>
</dbReference>
<dbReference type="Pfam" id="PF02788">
    <property type="entry name" value="RuBisCO_large_N"/>
    <property type="match status" value="1"/>
</dbReference>
<dbReference type="SFLD" id="SFLDG01052">
    <property type="entry name" value="RuBisCO"/>
    <property type="match status" value="1"/>
</dbReference>
<dbReference type="SFLD" id="SFLDS00014">
    <property type="entry name" value="RuBisCO"/>
    <property type="match status" value="1"/>
</dbReference>
<dbReference type="SFLD" id="SFLDG00301">
    <property type="entry name" value="RuBisCO-like_proteins"/>
    <property type="match status" value="1"/>
</dbReference>
<dbReference type="SUPFAM" id="SSF51649">
    <property type="entry name" value="RuBisCo, C-terminal domain"/>
    <property type="match status" value="1"/>
</dbReference>
<dbReference type="SUPFAM" id="SSF54966">
    <property type="entry name" value="RuBisCO, large subunit, small (N-terminal) domain"/>
    <property type="match status" value="1"/>
</dbReference>
<dbReference type="PROSITE" id="PS00157">
    <property type="entry name" value="RUBISCO_LARGE"/>
    <property type="match status" value="1"/>
</dbReference>
<protein>
    <recommendedName>
        <fullName evidence="1">Ribulose bisphosphate carboxylase large chain</fullName>
        <shortName evidence="1">RuBisCO large subunit</shortName>
        <ecNumber evidence="1">4.1.1.39</ecNumber>
    </recommendedName>
</protein>
<name>RBL_BARSO</name>
<gene>
    <name evidence="1" type="primary">rbcL</name>
</gene>
<reference key="1">
    <citation type="journal article" date="1992" name="Ann. Mo. Bot. Gard.">
        <title>Phylogenetic implications of rbcL sequence variation in the Asteraceae.</title>
        <authorList>
            <person name="Kim K.-J."/>
            <person name="Jansen R.K."/>
            <person name="Wallace R.S."/>
            <person name="Michaels H.J."/>
            <person name="Palmer J.D."/>
        </authorList>
        <dbReference type="AGRICOLA" id="IND93015009"/>
    </citation>
    <scope>NUCLEOTIDE SEQUENCE [GENOMIC DNA]</scope>
</reference>
<evidence type="ECO:0000255" key="1">
    <source>
        <dbReference type="HAMAP-Rule" id="MF_01338"/>
    </source>
</evidence>
<geneLocation type="chloroplast"/>
<feature type="propeptide" id="PRO_0000031213" evidence="1">
    <location>
        <begin position="1"/>
        <end position="2"/>
    </location>
</feature>
<feature type="chain" id="PRO_0000031214" description="Ribulose bisphosphate carboxylase large chain">
    <location>
        <begin position="3"/>
        <end position="485"/>
    </location>
</feature>
<feature type="active site" description="Proton acceptor" evidence="1">
    <location>
        <position position="175"/>
    </location>
</feature>
<feature type="active site" description="Proton acceptor" evidence="1">
    <location>
        <position position="294"/>
    </location>
</feature>
<feature type="binding site" description="in homodimeric partner" evidence="1">
    <location>
        <position position="123"/>
    </location>
    <ligand>
        <name>substrate</name>
    </ligand>
</feature>
<feature type="binding site" evidence="1">
    <location>
        <position position="173"/>
    </location>
    <ligand>
        <name>substrate</name>
    </ligand>
</feature>
<feature type="binding site" evidence="1">
    <location>
        <position position="177"/>
    </location>
    <ligand>
        <name>substrate</name>
    </ligand>
</feature>
<feature type="binding site" description="via carbamate group" evidence="1">
    <location>
        <position position="201"/>
    </location>
    <ligand>
        <name>Mg(2+)</name>
        <dbReference type="ChEBI" id="CHEBI:18420"/>
    </ligand>
</feature>
<feature type="binding site" evidence="1">
    <location>
        <position position="203"/>
    </location>
    <ligand>
        <name>Mg(2+)</name>
        <dbReference type="ChEBI" id="CHEBI:18420"/>
    </ligand>
</feature>
<feature type="binding site" evidence="1">
    <location>
        <position position="204"/>
    </location>
    <ligand>
        <name>Mg(2+)</name>
        <dbReference type="ChEBI" id="CHEBI:18420"/>
    </ligand>
</feature>
<feature type="binding site" evidence="1">
    <location>
        <position position="295"/>
    </location>
    <ligand>
        <name>substrate</name>
    </ligand>
</feature>
<feature type="binding site" evidence="1">
    <location>
        <position position="327"/>
    </location>
    <ligand>
        <name>substrate</name>
    </ligand>
</feature>
<feature type="binding site" evidence="1">
    <location>
        <position position="379"/>
    </location>
    <ligand>
        <name>substrate</name>
    </ligand>
</feature>
<feature type="site" description="Transition state stabilizer" evidence="1">
    <location>
        <position position="334"/>
    </location>
</feature>
<feature type="modified residue" description="N-acetylproline" evidence="1">
    <location>
        <position position="3"/>
    </location>
</feature>
<feature type="modified residue" description="N6,N6,N6-trimethyllysine" evidence="1">
    <location>
        <position position="14"/>
    </location>
</feature>
<feature type="modified residue" description="N6-carboxylysine" evidence="1">
    <location>
        <position position="201"/>
    </location>
</feature>
<feature type="disulfide bond" description="Interchain; in linked form" evidence="1">
    <location>
        <position position="247"/>
    </location>
</feature>
<proteinExistence type="inferred from homology"/>
<sequence length="485" mass="53849">MSPQTETKASVGFKAGVKDYKLTYYTPEYETKDTDILAAFRVTPQPGVPPEEAGAAVAAESSTGTWTTVWTDGLTSLDRYKGRCYGIEPVPGEDNQYIAYVAYPLDLFEEGSVTNMFTSIVGNVFGFKALRALRLEDLRIPTAYVKTFDGPPHGIQVERDKLNKYGRPLLGCTIKPKLGLSAKNYGRACYECLRGGLDFTKDDENVNSQPFMRWRDRFLFCAEALYKAQAETGEIKGHYLNATAGTCEDMMKRAVFARELGVPIVMHDYLTGGFTANTSLAHYCRDNGLLLHIHRAMHAVIDRQKNHGMHFRVLAKALRMSGGDHIHSGTVVGKLEGEREITLGFVDLLRDDFIEKDRSRGIYFTQDWVSLPGVLPVASGGIHVWHMPALTEIFGDDSVLQFGGGTLGHPWGNAPGAVANRVALEACVQARNEGRDLATEGNEIIREATKWSPELAAACEVWKEIKFEFQAMDTLDTDKDKDKKR</sequence>
<keyword id="KW-0007">Acetylation</keyword>
<keyword id="KW-0113">Calvin cycle</keyword>
<keyword id="KW-0120">Carbon dioxide fixation</keyword>
<keyword id="KW-0150">Chloroplast</keyword>
<keyword id="KW-1015">Disulfide bond</keyword>
<keyword id="KW-0456">Lyase</keyword>
<keyword id="KW-0460">Magnesium</keyword>
<keyword id="KW-0479">Metal-binding</keyword>
<keyword id="KW-0488">Methylation</keyword>
<keyword id="KW-0503">Monooxygenase</keyword>
<keyword id="KW-0560">Oxidoreductase</keyword>
<keyword id="KW-0601">Photorespiration</keyword>
<keyword id="KW-0602">Photosynthesis</keyword>
<keyword id="KW-0934">Plastid</keyword>